<feature type="initiator methionine" description="Removed" evidence="8">
    <location>
        <position position="1"/>
    </location>
</feature>
<feature type="chain" id="PRO_0000003564" description="Cytochrome P450 1A1">
    <location>
        <begin position="2"/>
        <end position="524"/>
    </location>
</feature>
<feature type="chain" id="PRO_0000003565" description="Cytochrome P450MT2A">
    <location>
        <begin position="5"/>
        <end position="524"/>
    </location>
</feature>
<feature type="chain" id="PRO_0000003566" description="Cytochrome P450MT2B">
    <location>
        <begin position="33"/>
        <end position="524"/>
    </location>
</feature>
<feature type="region of interest" description="Mitochondrial targeting signal" evidence="3 6">
    <location>
        <begin position="33"/>
        <end position="44"/>
    </location>
</feature>
<feature type="binding site" evidence="1">
    <location>
        <position position="228"/>
    </location>
    <ligand>
        <name>substrate</name>
    </ligand>
</feature>
<feature type="binding site" description="axial binding residue">
    <location>
        <position position="461"/>
    </location>
    <ligand>
        <name>heme</name>
        <dbReference type="ChEBI" id="CHEBI:30413"/>
    </ligand>
    <ligandPart>
        <name>Fe</name>
        <dbReference type="ChEBI" id="CHEBI:18248"/>
    </ligandPart>
</feature>
<feature type="glycosylation site" description="O-linked (GlcNAc) serine" evidence="5">
    <location>
        <position position="71"/>
    </location>
</feature>
<feature type="mutagenesis site" description="No proteolytic cleavage." evidence="6">
    <original>VT</original>
    <variation>AI</variation>
    <location>
        <begin position="32"/>
        <end position="33"/>
    </location>
</feature>
<feature type="sequence conflict" description="In Ref. 5; AA sequence." evidence="8" ref="5">
    <original>TT</original>
    <variation>VV</variation>
    <location>
        <begin position="21"/>
        <end position="22"/>
    </location>
</feature>
<feature type="sequence conflict" description="In Ref. 2; CAA25153." evidence="8" ref="2">
    <original>I</original>
    <variation>M</variation>
    <location>
        <position position="53"/>
    </location>
</feature>
<feature type="sequence conflict" description="In Ref. 3; AAA41025." evidence="8" ref="3">
    <original>M</original>
    <variation>S</variation>
    <location>
        <position position="494"/>
    </location>
</feature>
<protein>
    <recommendedName>
        <fullName>Cytochrome P450 1A1</fullName>
        <shortName>CYP1A1</shortName>
        <ecNumber evidence="2">1.14.14.1</ecNumber>
    </recommendedName>
    <alternativeName>
        <fullName>CYPIA1</fullName>
    </alternativeName>
    <alternativeName>
        <fullName>Cytochrome P450 form 6</fullName>
    </alternativeName>
    <alternativeName>
        <fullName>Cytochrome P450-C</fullName>
    </alternativeName>
    <alternativeName>
        <fullName>Cytochrome P450-P1</fullName>
    </alternativeName>
    <alternativeName>
        <fullName>Cytochrome P450MT2</fullName>
    </alternativeName>
    <alternativeName>
        <fullName>Hydroperoxy icosatetraenoate dehydratase</fullName>
        <ecNumber evidence="2">4.2.1.152</ecNumber>
    </alternativeName>
    <component>
        <recommendedName>
            <fullName>Cytochrome P450MT2A</fullName>
        </recommendedName>
    </component>
    <component>
        <recommendedName>
            <fullName>Cytochrome P450MT2B</fullName>
        </recommendedName>
    </component>
</protein>
<proteinExistence type="evidence at protein level"/>
<evidence type="ECO:0000250" key="1"/>
<evidence type="ECO:0000250" key="2">
    <source>
        <dbReference type="UniProtKB" id="P04798"/>
    </source>
</evidence>
<evidence type="ECO:0000269" key="3">
    <source>
    </source>
</evidence>
<evidence type="ECO:0000269" key="4">
    <source>
    </source>
</evidence>
<evidence type="ECO:0000269" key="5">
    <source>
    </source>
</evidence>
<evidence type="ECO:0000269" key="6">
    <source>
    </source>
</evidence>
<evidence type="ECO:0000303" key="7">
    <source>
    </source>
</evidence>
<evidence type="ECO:0000305" key="8"/>
<evidence type="ECO:0000305" key="9">
    <source>
    </source>
</evidence>
<evidence type="ECO:0000305" key="10">
    <source>
    </source>
</evidence>
<evidence type="ECO:0000305" key="11">
    <source>
    </source>
</evidence>
<evidence type="ECO:0000312" key="12">
    <source>
        <dbReference type="RGD" id="2458"/>
    </source>
</evidence>
<comment type="function">
    <text evidence="2 4">A cytochrome P450 monooxygenase involved in the metabolism of various endogenous substrates, including fatty acids, steroid hormones and vitamins. Mechanistically, uses molecular oxygen inserting one oxygen atom into a substrate, and reducing the second into a water molecule, with two electrons provided by NADPH via cytochrome P450 reductase (CPR; NADPH-ferrihemoprotein reductase). Catalyzes the hydroxylation of carbon-hydrogen bonds. Exhibits high catalytic activity for the formation of hydroxyestrogens from estrone (E1) and 17beta-estradiol (E2), namely 2-hydroxy E1 and E2, as well as D-ring hydroxylated E1 and E2 at the C15alpha and C16alpha positions (By similarity). Displays different regioselectivities for polyunsaturated fatty acids (PUFA) hydroxylation (By similarity). Catalyzes the epoxidation of double bonds of certain PUFA (PubMed:20972997). Converts arachidonic acid toward epoxyeicosatrienoic acid (EET) regioisomers, 8,9-, 11,12-, and 14,15-EET, that function as lipid mediators in the vascular system. Displays an absolute stereoselectivity in the epoxidation of eicosapentaenoic acid (EPA) producing the 17(R),18(S) enantiomer (By similarity). May play an important role in all-trans retinoic acid biosynthesis in extrahepatic tissues. Catalyzes two successive oxidative transformation of all-trans retinol to all-trans retinal and then to the active form all-trans retinoic acid (By similarity). May also participate in eicosanoids metabolism by converting hydroperoxide species into oxo metabolites (lipoxygenase-like reaction, NADPH-independent) (By similarity).</text>
</comment>
<comment type="catalytic activity">
    <reaction evidence="2">
        <text>an organic molecule + reduced [NADPH--hemoprotein reductase] + O2 = an alcohol + oxidized [NADPH--hemoprotein reductase] + H2O + H(+)</text>
        <dbReference type="Rhea" id="RHEA:17149"/>
        <dbReference type="Rhea" id="RHEA-COMP:11964"/>
        <dbReference type="Rhea" id="RHEA-COMP:11965"/>
        <dbReference type="ChEBI" id="CHEBI:15377"/>
        <dbReference type="ChEBI" id="CHEBI:15378"/>
        <dbReference type="ChEBI" id="CHEBI:15379"/>
        <dbReference type="ChEBI" id="CHEBI:30879"/>
        <dbReference type="ChEBI" id="CHEBI:57618"/>
        <dbReference type="ChEBI" id="CHEBI:58210"/>
        <dbReference type="ChEBI" id="CHEBI:142491"/>
        <dbReference type="EC" id="1.14.14.1"/>
    </reaction>
    <physiologicalReaction direction="right-to-left" evidence="2">
        <dbReference type="Rhea" id="RHEA:17151"/>
    </physiologicalReaction>
</comment>
<comment type="catalytic activity">
    <reaction evidence="2">
        <text>estrone + reduced [NADPH--hemoprotein reductase] + O2 = 2-hydroxyestrone + oxidized [NADPH--hemoprotein reductase] + H2O + H(+)</text>
        <dbReference type="Rhea" id="RHEA:47208"/>
        <dbReference type="Rhea" id="RHEA-COMP:11964"/>
        <dbReference type="Rhea" id="RHEA-COMP:11965"/>
        <dbReference type="ChEBI" id="CHEBI:1156"/>
        <dbReference type="ChEBI" id="CHEBI:15377"/>
        <dbReference type="ChEBI" id="CHEBI:15378"/>
        <dbReference type="ChEBI" id="CHEBI:15379"/>
        <dbReference type="ChEBI" id="CHEBI:17263"/>
        <dbReference type="ChEBI" id="CHEBI:57618"/>
        <dbReference type="ChEBI" id="CHEBI:58210"/>
    </reaction>
    <physiologicalReaction direction="left-to-right" evidence="2">
        <dbReference type="Rhea" id="RHEA:47209"/>
    </physiologicalReaction>
</comment>
<comment type="catalytic activity">
    <reaction evidence="2">
        <text>estrone + reduced [NADPH--hemoprotein reductase] + O2 = 4-hydroxyestrone + oxidized [NADPH--hemoprotein reductase] + H2O + H(+)</text>
        <dbReference type="Rhea" id="RHEA:47292"/>
        <dbReference type="Rhea" id="RHEA-COMP:11964"/>
        <dbReference type="Rhea" id="RHEA-COMP:11965"/>
        <dbReference type="ChEBI" id="CHEBI:15377"/>
        <dbReference type="ChEBI" id="CHEBI:15378"/>
        <dbReference type="ChEBI" id="CHEBI:15379"/>
        <dbReference type="ChEBI" id="CHEBI:17263"/>
        <dbReference type="ChEBI" id="CHEBI:57618"/>
        <dbReference type="ChEBI" id="CHEBI:58210"/>
        <dbReference type="ChEBI" id="CHEBI:87602"/>
    </reaction>
    <physiologicalReaction direction="left-to-right" evidence="2">
        <dbReference type="Rhea" id="RHEA:47293"/>
    </physiologicalReaction>
</comment>
<comment type="catalytic activity">
    <reaction evidence="2">
        <text>estrone + reduced [NADPH--hemoprotein reductase] + O2 = 6alpha-hydroxyestrone + oxidized [NADPH--hemoprotein reductase] + H2O + H(+)</text>
        <dbReference type="Rhea" id="RHEA:47308"/>
        <dbReference type="Rhea" id="RHEA-COMP:11964"/>
        <dbReference type="Rhea" id="RHEA-COMP:11965"/>
        <dbReference type="ChEBI" id="CHEBI:15377"/>
        <dbReference type="ChEBI" id="CHEBI:15378"/>
        <dbReference type="ChEBI" id="CHEBI:15379"/>
        <dbReference type="ChEBI" id="CHEBI:17263"/>
        <dbReference type="ChEBI" id="CHEBI:57618"/>
        <dbReference type="ChEBI" id="CHEBI:58210"/>
        <dbReference type="ChEBI" id="CHEBI:87605"/>
    </reaction>
    <physiologicalReaction direction="left-to-right" evidence="2">
        <dbReference type="Rhea" id="RHEA:47309"/>
    </physiologicalReaction>
</comment>
<comment type="catalytic activity">
    <reaction evidence="2">
        <text>estrone + reduced [NADPH--hemoprotein reductase] + O2 = 15alpha-hydroxyestrone + oxidized [NADPH--hemoprotein reductase] + H2O + H(+)</text>
        <dbReference type="Rhea" id="RHEA:47312"/>
        <dbReference type="Rhea" id="RHEA-COMP:11964"/>
        <dbReference type="Rhea" id="RHEA-COMP:11965"/>
        <dbReference type="ChEBI" id="CHEBI:15377"/>
        <dbReference type="ChEBI" id="CHEBI:15378"/>
        <dbReference type="ChEBI" id="CHEBI:15379"/>
        <dbReference type="ChEBI" id="CHEBI:17263"/>
        <dbReference type="ChEBI" id="CHEBI:57618"/>
        <dbReference type="ChEBI" id="CHEBI:58210"/>
        <dbReference type="ChEBI" id="CHEBI:87618"/>
    </reaction>
    <physiologicalReaction direction="left-to-right" evidence="2">
        <dbReference type="Rhea" id="RHEA:47313"/>
    </physiologicalReaction>
</comment>
<comment type="catalytic activity">
    <reaction evidence="2">
        <text>estrone + reduced [NADPH--hemoprotein reductase] + O2 = 16alpha-hydroxyestrone + oxidized [NADPH--hemoprotein reductase] + H2O + H(+)</text>
        <dbReference type="Rhea" id="RHEA:47204"/>
        <dbReference type="Rhea" id="RHEA-COMP:11964"/>
        <dbReference type="Rhea" id="RHEA-COMP:11965"/>
        <dbReference type="ChEBI" id="CHEBI:776"/>
        <dbReference type="ChEBI" id="CHEBI:15377"/>
        <dbReference type="ChEBI" id="CHEBI:15378"/>
        <dbReference type="ChEBI" id="CHEBI:15379"/>
        <dbReference type="ChEBI" id="CHEBI:17263"/>
        <dbReference type="ChEBI" id="CHEBI:57618"/>
        <dbReference type="ChEBI" id="CHEBI:58210"/>
    </reaction>
    <physiologicalReaction direction="left-to-right" evidence="2">
        <dbReference type="Rhea" id="RHEA:47205"/>
    </physiologicalReaction>
</comment>
<comment type="catalytic activity">
    <reaction evidence="2">
        <text>17beta-estradiol + reduced [NADPH--hemoprotein reductase] + O2 = 2-hydroxy-17beta-estradiol + oxidized [NADPH--hemoprotein reductase] + H2O + H(+)</text>
        <dbReference type="Rhea" id="RHEA:47212"/>
        <dbReference type="Rhea" id="RHEA-COMP:11964"/>
        <dbReference type="Rhea" id="RHEA-COMP:11965"/>
        <dbReference type="ChEBI" id="CHEBI:15377"/>
        <dbReference type="ChEBI" id="CHEBI:15378"/>
        <dbReference type="ChEBI" id="CHEBI:15379"/>
        <dbReference type="ChEBI" id="CHEBI:16469"/>
        <dbReference type="ChEBI" id="CHEBI:28744"/>
        <dbReference type="ChEBI" id="CHEBI:57618"/>
        <dbReference type="ChEBI" id="CHEBI:58210"/>
    </reaction>
    <physiologicalReaction direction="left-to-right" evidence="2">
        <dbReference type="Rhea" id="RHEA:47213"/>
    </physiologicalReaction>
</comment>
<comment type="catalytic activity">
    <reaction evidence="2">
        <text>17beta-estradiol + reduced [NADPH--hemoprotein reductase] + O2 = 4-hydroxy-17beta-estradiol + oxidized [NADPH--hemoprotein reductase] + H2O + H(+)</text>
        <dbReference type="Rhea" id="RHEA:47280"/>
        <dbReference type="Rhea" id="RHEA-COMP:11964"/>
        <dbReference type="Rhea" id="RHEA-COMP:11965"/>
        <dbReference type="ChEBI" id="CHEBI:15377"/>
        <dbReference type="ChEBI" id="CHEBI:15378"/>
        <dbReference type="ChEBI" id="CHEBI:15379"/>
        <dbReference type="ChEBI" id="CHEBI:16469"/>
        <dbReference type="ChEBI" id="CHEBI:57618"/>
        <dbReference type="ChEBI" id="CHEBI:58210"/>
        <dbReference type="ChEBI" id="CHEBI:62845"/>
    </reaction>
    <physiologicalReaction direction="left-to-right" evidence="2">
        <dbReference type="Rhea" id="RHEA:47281"/>
    </physiologicalReaction>
</comment>
<comment type="catalytic activity">
    <reaction evidence="2">
        <text>17beta-estradiol + reduced [NADPH--hemoprotein reductase] + O2 = 6alpha-hydroxy-17beta-estradiol + oxidized [NADPH--hemoprotein reductase] + H2O + H(+)</text>
        <dbReference type="Rhea" id="RHEA:47284"/>
        <dbReference type="Rhea" id="RHEA-COMP:11964"/>
        <dbReference type="Rhea" id="RHEA-COMP:11965"/>
        <dbReference type="ChEBI" id="CHEBI:15377"/>
        <dbReference type="ChEBI" id="CHEBI:15378"/>
        <dbReference type="ChEBI" id="CHEBI:15379"/>
        <dbReference type="ChEBI" id="CHEBI:16469"/>
        <dbReference type="ChEBI" id="CHEBI:57618"/>
        <dbReference type="ChEBI" id="CHEBI:58210"/>
        <dbReference type="ChEBI" id="CHEBI:62847"/>
    </reaction>
    <physiologicalReaction direction="left-to-right" evidence="2">
        <dbReference type="Rhea" id="RHEA:47285"/>
    </physiologicalReaction>
</comment>
<comment type="catalytic activity">
    <reaction evidence="2">
        <text>17beta-estradiol + reduced [NADPH--hemoprotein reductase] + O2 = 7alpha-hydroxy-17beta-estradiol + oxidized [NADPH--hemoprotein reductase] + H2O + H(+)</text>
        <dbReference type="Rhea" id="RHEA:47288"/>
        <dbReference type="Rhea" id="RHEA-COMP:11964"/>
        <dbReference type="Rhea" id="RHEA-COMP:11965"/>
        <dbReference type="ChEBI" id="CHEBI:15377"/>
        <dbReference type="ChEBI" id="CHEBI:15378"/>
        <dbReference type="ChEBI" id="CHEBI:15379"/>
        <dbReference type="ChEBI" id="CHEBI:16469"/>
        <dbReference type="ChEBI" id="CHEBI:57618"/>
        <dbReference type="ChEBI" id="CHEBI:58210"/>
        <dbReference type="ChEBI" id="CHEBI:87598"/>
    </reaction>
    <physiologicalReaction direction="left-to-right" evidence="2">
        <dbReference type="Rhea" id="RHEA:47289"/>
    </physiologicalReaction>
</comment>
<comment type="catalytic activity">
    <reaction evidence="2">
        <text>17beta-estradiol + reduced [NADPH--hemoprotein reductase] + O2 = 15alpha-hydroxy-17beta-estradiol + oxidized [NADPH--hemoprotein reductase] + H2O + H(+)</text>
        <dbReference type="Rhea" id="RHEA:47276"/>
        <dbReference type="Rhea" id="RHEA-COMP:11964"/>
        <dbReference type="Rhea" id="RHEA-COMP:11965"/>
        <dbReference type="ChEBI" id="CHEBI:15377"/>
        <dbReference type="ChEBI" id="CHEBI:15378"/>
        <dbReference type="ChEBI" id="CHEBI:15379"/>
        <dbReference type="ChEBI" id="CHEBI:16469"/>
        <dbReference type="ChEBI" id="CHEBI:57618"/>
        <dbReference type="ChEBI" id="CHEBI:58210"/>
        <dbReference type="ChEBI" id="CHEBI:87593"/>
    </reaction>
    <physiologicalReaction direction="left-to-right" evidence="2">
        <dbReference type="Rhea" id="RHEA:47277"/>
    </physiologicalReaction>
</comment>
<comment type="catalytic activity">
    <reaction evidence="2">
        <text>(5Z,8Z,11Z)-eicosatrienoate + reduced [NADPH--hemoprotein reductase] + O2 = 19-hydroxy-(5Z,8Z,11Z)-eicosatrienoate + oxidized [NADPH--hemoprotein reductase] + H2O + H(+)</text>
        <dbReference type="Rhea" id="RHEA:50076"/>
        <dbReference type="Rhea" id="RHEA-COMP:11964"/>
        <dbReference type="Rhea" id="RHEA-COMP:11965"/>
        <dbReference type="ChEBI" id="CHEBI:15377"/>
        <dbReference type="ChEBI" id="CHEBI:15378"/>
        <dbReference type="ChEBI" id="CHEBI:15379"/>
        <dbReference type="ChEBI" id="CHEBI:57618"/>
        <dbReference type="ChEBI" id="CHEBI:58210"/>
        <dbReference type="ChEBI" id="CHEBI:78043"/>
        <dbReference type="ChEBI" id="CHEBI:132024"/>
    </reaction>
    <physiologicalReaction direction="left-to-right" evidence="2">
        <dbReference type="Rhea" id="RHEA:50077"/>
    </physiologicalReaction>
</comment>
<comment type="catalytic activity">
    <reaction evidence="2">
        <text>(5Z,8Z,11Z,14Z)-eicosatetraenoate + reduced [NADPH--hemoprotein reductase] + O2 = 16-hydroxy-(5Z,8Z,11Z,14Z)-eicosatetraenoate + oxidized [NADPH--hemoprotein reductase] + H2O + H(+)</text>
        <dbReference type="Rhea" id="RHEA:49972"/>
        <dbReference type="Rhea" id="RHEA-COMP:11964"/>
        <dbReference type="Rhea" id="RHEA-COMP:11965"/>
        <dbReference type="ChEBI" id="CHEBI:15377"/>
        <dbReference type="ChEBI" id="CHEBI:15378"/>
        <dbReference type="ChEBI" id="CHEBI:15379"/>
        <dbReference type="ChEBI" id="CHEBI:32395"/>
        <dbReference type="ChEBI" id="CHEBI:57618"/>
        <dbReference type="ChEBI" id="CHEBI:58210"/>
        <dbReference type="ChEBI" id="CHEBI:132019"/>
    </reaction>
    <physiologicalReaction direction="left-to-right" evidence="2">
        <dbReference type="Rhea" id="RHEA:49973"/>
    </physiologicalReaction>
</comment>
<comment type="catalytic activity">
    <reaction evidence="2">
        <text>(5Z,8Z,11Z,14Z)-eicosatetraenoate + reduced [NADPH--hemoprotein reductase] + O2 = 17-hydroxy-(5Z,8Z,11Z,14Z)-eicosatetraenoate + oxidized [NADPH--hemoprotein reductase] + H2O + H(+)</text>
        <dbReference type="Rhea" id="RHEA:49968"/>
        <dbReference type="Rhea" id="RHEA-COMP:11964"/>
        <dbReference type="Rhea" id="RHEA-COMP:11965"/>
        <dbReference type="ChEBI" id="CHEBI:15377"/>
        <dbReference type="ChEBI" id="CHEBI:15378"/>
        <dbReference type="ChEBI" id="CHEBI:15379"/>
        <dbReference type="ChEBI" id="CHEBI:32395"/>
        <dbReference type="ChEBI" id="CHEBI:57618"/>
        <dbReference type="ChEBI" id="CHEBI:58210"/>
        <dbReference type="ChEBI" id="CHEBI:132016"/>
    </reaction>
    <physiologicalReaction direction="left-to-right" evidence="2">
        <dbReference type="Rhea" id="RHEA:49969"/>
    </physiologicalReaction>
</comment>
<comment type="catalytic activity">
    <reaction evidence="2">
        <text>(5Z,8Z,11Z,14Z)-eicosatetraenoate + reduced [NADPH--hemoprotein reductase] + O2 = 18-hydroxy-(5Z,8Z,11Z,14Z)-eicosatetraenoate + oxidized [NADPH--hemoprotein reductase] + H2O + H(+)</text>
        <dbReference type="Rhea" id="RHEA:39811"/>
        <dbReference type="Rhea" id="RHEA-COMP:11964"/>
        <dbReference type="Rhea" id="RHEA-COMP:11965"/>
        <dbReference type="ChEBI" id="CHEBI:15377"/>
        <dbReference type="ChEBI" id="CHEBI:15378"/>
        <dbReference type="ChEBI" id="CHEBI:15379"/>
        <dbReference type="ChEBI" id="CHEBI:32395"/>
        <dbReference type="ChEBI" id="CHEBI:57618"/>
        <dbReference type="ChEBI" id="CHEBI:58210"/>
        <dbReference type="ChEBI" id="CHEBI:63590"/>
    </reaction>
    <physiologicalReaction direction="left-to-right" evidence="2">
        <dbReference type="Rhea" id="RHEA:39812"/>
    </physiologicalReaction>
</comment>
<comment type="catalytic activity">
    <reaction evidence="2">
        <text>(5Z,8Z,11Z,14Z)-eicosatetraenoate + reduced [NADPH--hemoprotein reductase] + O2 = 19-hydroxy-(5Z,8Z,11Z,14Z)-eicosatetraenoate + oxidized [NADPH--hemoprotein reductase] + H2O + H(+)</text>
        <dbReference type="Rhea" id="RHEA:39759"/>
        <dbReference type="Rhea" id="RHEA-COMP:11964"/>
        <dbReference type="Rhea" id="RHEA-COMP:11965"/>
        <dbReference type="ChEBI" id="CHEBI:15377"/>
        <dbReference type="ChEBI" id="CHEBI:15378"/>
        <dbReference type="ChEBI" id="CHEBI:15379"/>
        <dbReference type="ChEBI" id="CHEBI:32395"/>
        <dbReference type="ChEBI" id="CHEBI:57618"/>
        <dbReference type="ChEBI" id="CHEBI:58210"/>
        <dbReference type="ChEBI" id="CHEBI:76627"/>
    </reaction>
    <physiologicalReaction direction="left-to-right" evidence="2">
        <dbReference type="Rhea" id="RHEA:39760"/>
    </physiologicalReaction>
</comment>
<comment type="catalytic activity">
    <reaction evidence="2">
        <text>(5Z,8Z,11Z,14Z,17Z)-eicosapentaenoate + reduced [NADPH--hemoprotein reductase] + O2 = 19-hydroxy-(5Z,8Z,11Z,14Z,17Z)-eicosapentaenoate + oxidized [NADPH--hemoprotein reductase] + H2O + H(+)</text>
        <dbReference type="Rhea" id="RHEA:39787"/>
        <dbReference type="Rhea" id="RHEA-COMP:11964"/>
        <dbReference type="Rhea" id="RHEA-COMP:11965"/>
        <dbReference type="ChEBI" id="CHEBI:15377"/>
        <dbReference type="ChEBI" id="CHEBI:15378"/>
        <dbReference type="ChEBI" id="CHEBI:15379"/>
        <dbReference type="ChEBI" id="CHEBI:57618"/>
        <dbReference type="ChEBI" id="CHEBI:58210"/>
        <dbReference type="ChEBI" id="CHEBI:58562"/>
        <dbReference type="ChEBI" id="CHEBI:76636"/>
    </reaction>
    <physiologicalReaction direction="left-to-right" evidence="2">
        <dbReference type="Rhea" id="RHEA:39788"/>
    </physiologicalReaction>
</comment>
<comment type="catalytic activity">
    <reaction evidence="4">
        <text>(5Z,8Z,11Z,14Z)-eicosatetraenoate + reduced [NADPH--hemoprotein reductase] + O2 = (8R,9S)-epoxy-(5Z,11Z,14Z)-eicosatrienoate + oxidized [NADPH--hemoprotein reductase] + H2O + H(+)</text>
        <dbReference type="Rhea" id="RHEA:49884"/>
        <dbReference type="Rhea" id="RHEA-COMP:11964"/>
        <dbReference type="Rhea" id="RHEA-COMP:11965"/>
        <dbReference type="ChEBI" id="CHEBI:15377"/>
        <dbReference type="ChEBI" id="CHEBI:15378"/>
        <dbReference type="ChEBI" id="CHEBI:15379"/>
        <dbReference type="ChEBI" id="CHEBI:32395"/>
        <dbReference type="ChEBI" id="CHEBI:57618"/>
        <dbReference type="ChEBI" id="CHEBI:58210"/>
        <dbReference type="ChEBI" id="CHEBI:131975"/>
    </reaction>
    <physiologicalReaction direction="left-to-right" evidence="10">
        <dbReference type="Rhea" id="RHEA:49885"/>
    </physiologicalReaction>
</comment>
<comment type="catalytic activity">
    <reaction evidence="4">
        <text>(5Z,8Z,11Z,14Z)-eicosatetraenoate + reduced [NADPH--hemoprotein reductase] + O2 = (11R,12S)-epoxy-(5Z,8Z,14Z)-eicosatrienoate + oxidized [NADPH--hemoprotein reductase] + H2O + H(+)</text>
        <dbReference type="Rhea" id="RHEA:49880"/>
        <dbReference type="Rhea" id="RHEA-COMP:11964"/>
        <dbReference type="Rhea" id="RHEA-COMP:11965"/>
        <dbReference type="ChEBI" id="CHEBI:15377"/>
        <dbReference type="ChEBI" id="CHEBI:15378"/>
        <dbReference type="ChEBI" id="CHEBI:15379"/>
        <dbReference type="ChEBI" id="CHEBI:32395"/>
        <dbReference type="ChEBI" id="CHEBI:57618"/>
        <dbReference type="ChEBI" id="CHEBI:58210"/>
        <dbReference type="ChEBI" id="CHEBI:131970"/>
    </reaction>
    <physiologicalReaction direction="left-to-right" evidence="10">
        <dbReference type="Rhea" id="RHEA:49881"/>
    </physiologicalReaction>
</comment>
<comment type="catalytic activity">
    <reaction evidence="4">
        <text>(5Z,8Z,11Z,14Z)-eicosatetraenoate + reduced [NADPH--hemoprotein reductase] + O2 = (11S,12R)-epoxy-(5Z,8Z,14Z)-eicosatrienoate + oxidized [NADPH--hemoprotein reductase] + H2O + H(+)</text>
        <dbReference type="Rhea" id="RHEA:49876"/>
        <dbReference type="Rhea" id="RHEA-COMP:11964"/>
        <dbReference type="Rhea" id="RHEA-COMP:11965"/>
        <dbReference type="ChEBI" id="CHEBI:15377"/>
        <dbReference type="ChEBI" id="CHEBI:15378"/>
        <dbReference type="ChEBI" id="CHEBI:15379"/>
        <dbReference type="ChEBI" id="CHEBI:32395"/>
        <dbReference type="ChEBI" id="CHEBI:57618"/>
        <dbReference type="ChEBI" id="CHEBI:58210"/>
        <dbReference type="ChEBI" id="CHEBI:131969"/>
    </reaction>
    <physiologicalReaction direction="left-to-right" evidence="10">
        <dbReference type="Rhea" id="RHEA:49877"/>
    </physiologicalReaction>
</comment>
<comment type="catalytic activity">
    <reaction evidence="4">
        <text>(5Z,8Z,11Z,14Z)-eicosatetraenoate + reduced [NADPH--hemoprotein reductase] + O2 = (14R,15S)-epoxy-(5Z,8Z,11Z)-eicosatrienoate + oxidized [NADPH--hemoprotein reductase] + H2O + H(+)</text>
        <dbReference type="Rhea" id="RHEA:49860"/>
        <dbReference type="Rhea" id="RHEA-COMP:11964"/>
        <dbReference type="Rhea" id="RHEA-COMP:11965"/>
        <dbReference type="ChEBI" id="CHEBI:15377"/>
        <dbReference type="ChEBI" id="CHEBI:15378"/>
        <dbReference type="ChEBI" id="CHEBI:15379"/>
        <dbReference type="ChEBI" id="CHEBI:32395"/>
        <dbReference type="ChEBI" id="CHEBI:57618"/>
        <dbReference type="ChEBI" id="CHEBI:58210"/>
        <dbReference type="ChEBI" id="CHEBI:131965"/>
    </reaction>
    <physiologicalReaction direction="left-to-right" evidence="10">
        <dbReference type="Rhea" id="RHEA:49861"/>
    </physiologicalReaction>
</comment>
<comment type="catalytic activity">
    <reaction evidence="2">
        <text>(5Z,8Z,11Z,14Z,17Z)-eicosapentaenoate + reduced [NADPH--hemoprotein reductase] + O2 = (17R,18S)-epoxy-(5Z,8Z,11Z,14Z)-eicosatetraenoate + oxidized [NADPH--hemoprotein reductase] + H2O + H(+)</text>
        <dbReference type="Rhea" id="RHEA:39779"/>
        <dbReference type="Rhea" id="RHEA-COMP:11964"/>
        <dbReference type="Rhea" id="RHEA-COMP:11965"/>
        <dbReference type="ChEBI" id="CHEBI:15377"/>
        <dbReference type="ChEBI" id="CHEBI:15378"/>
        <dbReference type="ChEBI" id="CHEBI:15379"/>
        <dbReference type="ChEBI" id="CHEBI:57618"/>
        <dbReference type="ChEBI" id="CHEBI:58210"/>
        <dbReference type="ChEBI" id="CHEBI:58562"/>
        <dbReference type="ChEBI" id="CHEBI:76634"/>
    </reaction>
    <physiologicalReaction direction="left-to-right" evidence="2">
        <dbReference type="Rhea" id="RHEA:39780"/>
    </physiologicalReaction>
</comment>
<comment type="catalytic activity">
    <reaction evidence="2">
        <text>(4Z,7Z,10Z,13Z,16Z,19Z)-docosahexaenoate + reduced [NADPH--hemoprotein reductase] + O2 = (19S,20R)-epoxy-(4Z,7Z,10Z,13Z,16Z)-docosapentaenoate + oxidized [NADPH--hemoprotein reductase] + H2O + H(+)</text>
        <dbReference type="Rhea" id="RHEA:52124"/>
        <dbReference type="Rhea" id="RHEA-COMP:11964"/>
        <dbReference type="Rhea" id="RHEA-COMP:11965"/>
        <dbReference type="ChEBI" id="CHEBI:15377"/>
        <dbReference type="ChEBI" id="CHEBI:15378"/>
        <dbReference type="ChEBI" id="CHEBI:15379"/>
        <dbReference type="ChEBI" id="CHEBI:57618"/>
        <dbReference type="ChEBI" id="CHEBI:58210"/>
        <dbReference type="ChEBI" id="CHEBI:77016"/>
        <dbReference type="ChEBI" id="CHEBI:136411"/>
    </reaction>
    <physiologicalReaction direction="left-to-right" evidence="2">
        <dbReference type="Rhea" id="RHEA:52125"/>
    </physiologicalReaction>
</comment>
<comment type="catalytic activity">
    <reaction evidence="2">
        <text>(4Z,7Z,10Z,13Z,16Z,19Z)-docosahexaenoate + reduced [NADPH--hemoprotein reductase] + O2 = (19R,20S)-epoxy-(4Z,7Z,10Z,13Z,16Z)-docosapentaenoate + oxidized [NADPH--hemoprotein reductase] + H2O + H(+)</text>
        <dbReference type="Rhea" id="RHEA:52120"/>
        <dbReference type="Rhea" id="RHEA-COMP:11964"/>
        <dbReference type="Rhea" id="RHEA-COMP:11965"/>
        <dbReference type="ChEBI" id="CHEBI:15377"/>
        <dbReference type="ChEBI" id="CHEBI:15378"/>
        <dbReference type="ChEBI" id="CHEBI:15379"/>
        <dbReference type="ChEBI" id="CHEBI:57618"/>
        <dbReference type="ChEBI" id="CHEBI:58210"/>
        <dbReference type="ChEBI" id="CHEBI:77016"/>
        <dbReference type="ChEBI" id="CHEBI:136410"/>
    </reaction>
    <physiologicalReaction direction="left-to-right" evidence="2">
        <dbReference type="Rhea" id="RHEA:52121"/>
    </physiologicalReaction>
</comment>
<comment type="catalytic activity">
    <reaction evidence="2">
        <text>all-trans-retinol + reduced [NADPH--hemoprotein reductase] + O2 = all-trans-retinal + oxidized [NADPH--hemoprotein reductase] + 2 H2O + H(+)</text>
        <dbReference type="Rhea" id="RHEA:42092"/>
        <dbReference type="Rhea" id="RHEA-COMP:11964"/>
        <dbReference type="Rhea" id="RHEA-COMP:11965"/>
        <dbReference type="ChEBI" id="CHEBI:15377"/>
        <dbReference type="ChEBI" id="CHEBI:15378"/>
        <dbReference type="ChEBI" id="CHEBI:15379"/>
        <dbReference type="ChEBI" id="CHEBI:17336"/>
        <dbReference type="ChEBI" id="CHEBI:17898"/>
        <dbReference type="ChEBI" id="CHEBI:57618"/>
        <dbReference type="ChEBI" id="CHEBI:58210"/>
    </reaction>
    <physiologicalReaction direction="left-to-right" evidence="2">
        <dbReference type="Rhea" id="RHEA:42093"/>
    </physiologicalReaction>
</comment>
<comment type="catalytic activity">
    <reaction evidence="2">
        <text>all-trans-retinal + reduced [NADPH--hemoprotein reductase] + O2 = all-trans-retinoate + oxidized [NADPH--hemoprotein reductase] + H2O + 2 H(+)</text>
        <dbReference type="Rhea" id="RHEA:42088"/>
        <dbReference type="Rhea" id="RHEA-COMP:11964"/>
        <dbReference type="Rhea" id="RHEA-COMP:11965"/>
        <dbReference type="ChEBI" id="CHEBI:15377"/>
        <dbReference type="ChEBI" id="CHEBI:15378"/>
        <dbReference type="ChEBI" id="CHEBI:15379"/>
        <dbReference type="ChEBI" id="CHEBI:17898"/>
        <dbReference type="ChEBI" id="CHEBI:35291"/>
        <dbReference type="ChEBI" id="CHEBI:57618"/>
        <dbReference type="ChEBI" id="CHEBI:58210"/>
    </reaction>
    <physiologicalReaction direction="left-to-right" evidence="2">
        <dbReference type="Rhea" id="RHEA:42089"/>
    </physiologicalReaction>
</comment>
<comment type="catalytic activity">
    <reaction evidence="2">
        <text>(13S)-hydroperoxy-(9Z,11E)-octadecadienoate = 13-oxo-(9Z,11E)-octadecadienoate + H2O</text>
        <dbReference type="Rhea" id="RHEA:48716"/>
        <dbReference type="ChEBI" id="CHEBI:15377"/>
        <dbReference type="ChEBI" id="CHEBI:57466"/>
        <dbReference type="ChEBI" id="CHEBI:90781"/>
    </reaction>
    <physiologicalReaction direction="left-to-right" evidence="2">
        <dbReference type="Rhea" id="RHEA:48717"/>
    </physiologicalReaction>
</comment>
<comment type="catalytic activity">
    <reaction evidence="2">
        <text>(12S)-hydroperoxy-(5Z,8Z,10E,14Z)-eicosatetraenoate = 12-oxo-(5Z,8Z,10E,14Z)-eicosatetraenoate + H2O</text>
        <dbReference type="Rhea" id="RHEA:37947"/>
        <dbReference type="ChEBI" id="CHEBI:15377"/>
        <dbReference type="ChEBI" id="CHEBI:57444"/>
        <dbReference type="ChEBI" id="CHEBI:75231"/>
        <dbReference type="EC" id="4.2.1.152"/>
    </reaction>
    <physiologicalReaction direction="left-to-right" evidence="2">
        <dbReference type="Rhea" id="RHEA:37948"/>
    </physiologicalReaction>
</comment>
<comment type="catalytic activity">
    <reaction evidence="2">
        <text>(15S)-hydroperoxy-(5Z,8Z,11Z,13E)-eicosatetraenoate = 15-oxo-(5Z,8Z,11Z,13E)-eicosatetraenoate + H2O</text>
        <dbReference type="Rhea" id="RHEA:48636"/>
        <dbReference type="ChEBI" id="CHEBI:15377"/>
        <dbReference type="ChEBI" id="CHEBI:57410"/>
        <dbReference type="ChEBI" id="CHEBI:57446"/>
    </reaction>
    <physiologicalReaction direction="left-to-right" evidence="2">
        <dbReference type="Rhea" id="RHEA:48637"/>
    </physiologicalReaction>
</comment>
<comment type="catalytic activity">
    <reaction evidence="2">
        <text>(5S)-hydroperoxy-(6E,8Z,11Z,14Z)-eicosatetraenoate = 5-oxo-(6E,8Z,11Z,14Z)-eicosatetraenoate + H2O</text>
        <dbReference type="Rhea" id="RHEA:48632"/>
        <dbReference type="ChEBI" id="CHEBI:15377"/>
        <dbReference type="ChEBI" id="CHEBI:57450"/>
        <dbReference type="ChEBI" id="CHEBI:65342"/>
    </reaction>
    <physiologicalReaction direction="left-to-right" evidence="2">
        <dbReference type="Rhea" id="RHEA:48633"/>
    </physiologicalReaction>
</comment>
<comment type="cofactor">
    <cofactor evidence="1">
        <name>heme</name>
        <dbReference type="ChEBI" id="CHEBI:30413"/>
    </cofactor>
</comment>
<comment type="pathway">
    <text evidence="2">Steroid hormone biosynthesis.</text>
</comment>
<comment type="pathway">
    <text evidence="4">Lipid metabolism; fatty acid metabolism.</text>
</comment>
<comment type="pathway">
    <text evidence="2">Cofactor metabolism; retinol metabolism.</text>
</comment>
<comment type="subunit">
    <text evidence="3">Both Cytochrome P450MT2A and Cytochrome P450MT2B interact with cytosolic chaperones HSP70 and HSP90; this interaction is required for initial targeting to mitochondria. P450MT2B interacts (via mitochondrial targeting signal) with TOMM40 (via N-terminus); this interaction is required for translocation across the mitochondrial outer membrane.</text>
</comment>
<comment type="subcellular location">
    <molecule>Cytochrome P450 1A1</molecule>
    <subcellularLocation>
        <location evidence="6">Cytoplasm</location>
    </subcellularLocation>
</comment>
<comment type="subcellular location">
    <molecule>Cytochrome P450MT2A</molecule>
    <subcellularLocation>
        <location evidence="6">Endoplasmic reticulum membrane</location>
        <topology evidence="9 11">Peripheral membrane protein</topology>
    </subcellularLocation>
    <subcellularLocation>
        <location evidence="6">Mitochondrion inner membrane</location>
        <topology evidence="9 11">Peripheral membrane protein</topology>
    </subcellularLocation>
    <subcellularLocation>
        <location evidence="6">Microsome membrane</location>
        <topology evidence="9 11">Peripheral membrane protein</topology>
    </subcellularLocation>
</comment>
<comment type="subcellular location">
    <molecule>Cytochrome P450MT2B</molecule>
    <subcellularLocation>
        <location>Endoplasmic reticulum membrane</location>
        <topology>Peripheral membrane protein</topology>
    </subcellularLocation>
    <subcellularLocation>
        <location evidence="9">Mitochondrion inner membrane</location>
        <topology evidence="9 11">Peripheral membrane protein</topology>
    </subcellularLocation>
    <subcellularLocation>
        <location evidence="6">Microsome membrane</location>
        <topology evidence="9 11">Peripheral membrane protein</topology>
    </subcellularLocation>
</comment>
<comment type="tissue specificity">
    <text>Liver.</text>
</comment>
<comment type="induction">
    <text>By 3-methylcholanthrene (3MC) and beta-naphthoflavone (BNF).</text>
</comment>
<comment type="domain">
    <text>Contains a chimeric signal that facilitates targeting of the protein to both the endoplasmic reticulum and mitochondria. A 12 amino acid sequence between 33 and 44 functions as a putative mitochondrial-targeting signal. The removal of the first 4- or 32-amino acid residues from the intact protein positions the mitochondrial targeting signal for efficient binding to the mitochondrial import receptors. The membrane-free P4501A1 seems to be more sensitive to proteolysis.</text>
</comment>
<comment type="PTM">
    <text>Two forms; MT2A (long form) and MT2B (short form); are produced by NH2-terminal proteolytic cleavage. This cleavage activates a cryptic mitochondrial targeting signal.</text>
</comment>
<comment type="similarity">
    <text evidence="8">Belongs to the cytochrome P450 family.</text>
</comment>
<sequence length="524" mass="59393">MPSVYGFPAFTSATELLLAVTTFCLGFWVVRVTRTWVPKGLKSPPGPWGLPFIGHVLTLGKNPHLSLTKLSQQYGDVLQIRIGSTPVVVLSGLNTIKQALVKQGDDFKGRPDLYSFTLIANGQSMTFNPDSGPLWAARRRLAQNALKSFSIASDPTLASSCYLEEHVSKEAEYLISKFQKLMAEVGHFDPFKYLVVSVANVICAICFGRRYDHDDQELLSIVNLSNEFGEVTGSGYPADFIPILRYLPNSSLDAFKDLNKKFYSFMKKLIKEHYRTFEKGHIRDITDSLIEHCQDRRLDENANVQLSDDKVITIVFDLFGAGFDTITTAISWSLMYLVTNPRIQRKIQEELDTVIGRDRQPRLSDRPQLPYLEAFILETFRHSSFVPFTIPHSTIRDTSLNGFYIPKGHCVFVNQWQVNHDQELWGDPNEFRPERFLTSSGTLDKHLSEKVILFGLGKRKCIGETIGRLEVFLFLAILLQQMEFNVSPGEKVDMTPAYGLTLKHARCEHFQVQMRSSGPQHLQA</sequence>
<keyword id="KW-0963">Cytoplasm</keyword>
<keyword id="KW-0903">Direct protein sequencing</keyword>
<keyword id="KW-0256">Endoplasmic reticulum</keyword>
<keyword id="KW-0325">Glycoprotein</keyword>
<keyword id="KW-0349">Heme</keyword>
<keyword id="KW-0408">Iron</keyword>
<keyword id="KW-0444">Lipid biosynthesis</keyword>
<keyword id="KW-0443">Lipid metabolism</keyword>
<keyword id="KW-0456">Lyase</keyword>
<keyword id="KW-0472">Membrane</keyword>
<keyword id="KW-0479">Metal-binding</keyword>
<keyword id="KW-0492">Microsome</keyword>
<keyword id="KW-0496">Mitochondrion</keyword>
<keyword id="KW-0999">Mitochondrion inner membrane</keyword>
<keyword id="KW-0503">Monooxygenase</keyword>
<keyword id="KW-0560">Oxidoreductase</keyword>
<keyword id="KW-1185">Reference proteome</keyword>
<keyword id="KW-0752">Steroid biosynthesis</keyword>
<name>CP1A1_RAT</name>
<accession>P00185</accession>
<gene>
    <name evidence="7 12" type="primary">Cyp1a1</name>
    <name type="synonym">Cyp1a-1</name>
</gene>
<dbReference type="EC" id="1.14.14.1" evidence="2"/>
<dbReference type="EC" id="4.2.1.152" evidence="2"/>
<dbReference type="EMBL" id="K02246">
    <property type="protein sequence ID" value="AAA41027.1"/>
    <property type="molecule type" value="Genomic_DNA"/>
</dbReference>
<dbReference type="EMBL" id="X00469">
    <property type="protein sequence ID" value="CAA25153.1"/>
    <property type="molecule type" value="mRNA"/>
</dbReference>
<dbReference type="EMBL" id="M26129">
    <property type="protein sequence ID" value="AAA41025.1"/>
    <property type="molecule type" value="Genomic_DNA"/>
</dbReference>
<dbReference type="PIR" id="A00185">
    <property type="entry name" value="O4RTMC"/>
</dbReference>
<dbReference type="RefSeq" id="NP_036672.2">
    <property type="nucleotide sequence ID" value="NM_012540.2"/>
</dbReference>
<dbReference type="RefSeq" id="XP_006243212.1">
    <property type="nucleotide sequence ID" value="XM_006243150.4"/>
</dbReference>
<dbReference type="SMR" id="P00185"/>
<dbReference type="BioGRID" id="246477">
    <property type="interactions" value="2"/>
</dbReference>
<dbReference type="FunCoup" id="P00185">
    <property type="interactions" value="114"/>
</dbReference>
<dbReference type="STRING" id="10116.ENSRNOP00000026473"/>
<dbReference type="BindingDB" id="P00185"/>
<dbReference type="ChEMBL" id="CHEMBL2922"/>
<dbReference type="DrugBank" id="DB13746">
    <property type="generic name" value="Bioallethrin"/>
</dbReference>
<dbReference type="DrugBank" id="DB01645">
    <property type="generic name" value="Genistein"/>
</dbReference>
<dbReference type="SwissLipids" id="SLP:000001590"/>
<dbReference type="GlyCosmos" id="P00185">
    <property type="glycosylation" value="1 site, No reported glycans"/>
</dbReference>
<dbReference type="GlyGen" id="P00185">
    <property type="glycosylation" value="1 site, 1 O-linked glycan (1 site)"/>
</dbReference>
<dbReference type="iPTMnet" id="P00185"/>
<dbReference type="PhosphoSitePlus" id="P00185"/>
<dbReference type="PaxDb" id="10116-ENSRNOP00000026473"/>
<dbReference type="Ensembl" id="ENSRNOT00000026473.5">
    <property type="protein sequence ID" value="ENSRNOP00000026473.2"/>
    <property type="gene ID" value="ENSRNOG00000019500.5"/>
</dbReference>
<dbReference type="GeneID" id="24296"/>
<dbReference type="KEGG" id="rno:24296"/>
<dbReference type="UCSC" id="RGD:2458">
    <property type="organism name" value="rat"/>
</dbReference>
<dbReference type="AGR" id="RGD:2458"/>
<dbReference type="CTD" id="1543"/>
<dbReference type="RGD" id="2458">
    <property type="gene designation" value="Cyp1a1"/>
</dbReference>
<dbReference type="eggNOG" id="KOG0156">
    <property type="taxonomic scope" value="Eukaryota"/>
</dbReference>
<dbReference type="GeneTree" id="ENSGT00950000183037"/>
<dbReference type="HOGENOM" id="CLU_001570_22_0_1"/>
<dbReference type="InParanoid" id="P00185"/>
<dbReference type="OMA" id="DPRAYWQ"/>
<dbReference type="OrthoDB" id="1055148at2759"/>
<dbReference type="PhylomeDB" id="P00185"/>
<dbReference type="TreeFam" id="TF105095"/>
<dbReference type="Reactome" id="R-RNO-211981">
    <property type="pathway name" value="Xenobiotics"/>
</dbReference>
<dbReference type="Reactome" id="R-RNO-2142670">
    <property type="pathway name" value="Synthesis of epoxy (EET) and dihydroxyeicosatrienoic acids (DHET)"/>
</dbReference>
<dbReference type="Reactome" id="R-RNO-2142816">
    <property type="pathway name" value="Synthesis of (16-20)-hydroxyeicosatetraenoic acids (HETE)"/>
</dbReference>
<dbReference type="Reactome" id="R-RNO-9018681">
    <property type="pathway name" value="Biosynthesis of protectins"/>
</dbReference>
<dbReference type="SABIO-RK" id="P00185"/>
<dbReference type="UniPathway" id="UPA00199"/>
<dbReference type="UniPathway" id="UPA00912"/>
<dbReference type="PRO" id="PR:P00185"/>
<dbReference type="Proteomes" id="UP000002494">
    <property type="component" value="Chromosome 8"/>
</dbReference>
<dbReference type="Bgee" id="ENSRNOG00000019500">
    <property type="expression patterns" value="Expressed in duodenum and 10 other cell types or tissues"/>
</dbReference>
<dbReference type="GO" id="GO:0005789">
    <property type="term" value="C:endoplasmic reticulum membrane"/>
    <property type="evidence" value="ECO:0007669"/>
    <property type="project" value="UniProtKB-SubCell"/>
</dbReference>
<dbReference type="GO" id="GO:0043231">
    <property type="term" value="C:intracellular membrane-bounded organelle"/>
    <property type="evidence" value="ECO:0000318"/>
    <property type="project" value="GO_Central"/>
</dbReference>
<dbReference type="GO" id="GO:0005743">
    <property type="term" value="C:mitochondrial inner membrane"/>
    <property type="evidence" value="ECO:0000314"/>
    <property type="project" value="UniProtKB"/>
</dbReference>
<dbReference type="GO" id="GO:0008391">
    <property type="term" value="F:arachidonate monooxygenase activity"/>
    <property type="evidence" value="ECO:0000266"/>
    <property type="project" value="RGD"/>
</dbReference>
<dbReference type="GO" id="GO:0003824">
    <property type="term" value="F:catalytic activity"/>
    <property type="evidence" value="ECO:0000314"/>
    <property type="project" value="RGD"/>
</dbReference>
<dbReference type="GO" id="GO:0032451">
    <property type="term" value="F:demethylase activity"/>
    <property type="evidence" value="ECO:0000314"/>
    <property type="project" value="RGD"/>
</dbReference>
<dbReference type="GO" id="GO:0019899">
    <property type="term" value="F:enzyme binding"/>
    <property type="evidence" value="ECO:0000314"/>
    <property type="project" value="RGD"/>
</dbReference>
<dbReference type="GO" id="GO:0101020">
    <property type="term" value="F:estrogen 16-alpha-hydroxylase activity"/>
    <property type="evidence" value="ECO:0000250"/>
    <property type="project" value="UniProtKB"/>
</dbReference>
<dbReference type="GO" id="GO:0101021">
    <property type="term" value="F:estrogen 2-hydroxylase activity"/>
    <property type="evidence" value="ECO:0000250"/>
    <property type="project" value="UniProtKB"/>
</dbReference>
<dbReference type="GO" id="GO:0016711">
    <property type="term" value="F:flavonoid 3'-monooxygenase activity"/>
    <property type="evidence" value="ECO:0000314"/>
    <property type="project" value="RGD"/>
</dbReference>
<dbReference type="GO" id="GO:0020037">
    <property type="term" value="F:heme binding"/>
    <property type="evidence" value="ECO:0007669"/>
    <property type="project" value="InterPro"/>
</dbReference>
<dbReference type="GO" id="GO:0030544">
    <property type="term" value="F:Hsp70 protein binding"/>
    <property type="evidence" value="ECO:0000314"/>
    <property type="project" value="UniProtKB"/>
</dbReference>
<dbReference type="GO" id="GO:0051879">
    <property type="term" value="F:Hsp90 protein binding"/>
    <property type="evidence" value="ECO:0000314"/>
    <property type="project" value="UniProtKB"/>
</dbReference>
<dbReference type="GO" id="GO:0106256">
    <property type="term" value="F:hydroperoxy icosatetraenoate dehydratase activity"/>
    <property type="evidence" value="ECO:0007669"/>
    <property type="project" value="UniProtKB-EC"/>
</dbReference>
<dbReference type="GO" id="GO:0005506">
    <property type="term" value="F:iron ion binding"/>
    <property type="evidence" value="ECO:0007669"/>
    <property type="project" value="InterPro"/>
</dbReference>
<dbReference type="GO" id="GO:0120319">
    <property type="term" value="F:long-chain fatty acid omega-1 hydroxylase activity"/>
    <property type="evidence" value="ECO:0000266"/>
    <property type="project" value="RGD"/>
</dbReference>
<dbReference type="GO" id="GO:0102033">
    <property type="term" value="F:long-chain fatty acid omega-hydroxylase activity"/>
    <property type="evidence" value="ECO:0000266"/>
    <property type="project" value="RGD"/>
</dbReference>
<dbReference type="GO" id="GO:0004497">
    <property type="term" value="F:monooxygenase activity"/>
    <property type="evidence" value="ECO:0000314"/>
    <property type="project" value="RGD"/>
</dbReference>
<dbReference type="GO" id="GO:0016491">
    <property type="term" value="F:oxidoreductase activity"/>
    <property type="evidence" value="ECO:0000314"/>
    <property type="project" value="RGD"/>
</dbReference>
<dbReference type="GO" id="GO:0016679">
    <property type="term" value="F:oxidoreductase activity, acting on diphenols and related substances as donors"/>
    <property type="evidence" value="ECO:0000314"/>
    <property type="project" value="RGD"/>
</dbReference>
<dbReference type="GO" id="GO:0016712">
    <property type="term" value="F:oxidoreductase activity, acting on paired donors, with incorporation or reduction of molecular oxygen, reduced flavin or flavoprotein as one donor, and incorporation of one atom of oxygen"/>
    <property type="evidence" value="ECO:0000266"/>
    <property type="project" value="RGD"/>
</dbReference>
<dbReference type="GO" id="GO:0008395">
    <property type="term" value="F:steroid hydroxylase activity"/>
    <property type="evidence" value="ECO:0000314"/>
    <property type="project" value="RGD"/>
</dbReference>
<dbReference type="GO" id="GO:0070576">
    <property type="term" value="F:vitamin D 24-hydroxylase activity"/>
    <property type="evidence" value="ECO:0000266"/>
    <property type="project" value="RGD"/>
</dbReference>
<dbReference type="GO" id="GO:0042904">
    <property type="term" value="P:9-cis-retinoic acid biosynthetic process"/>
    <property type="evidence" value="ECO:0000314"/>
    <property type="project" value="RGD"/>
</dbReference>
<dbReference type="GO" id="GO:0009308">
    <property type="term" value="P:amine metabolic process"/>
    <property type="evidence" value="ECO:0000266"/>
    <property type="project" value="RGD"/>
</dbReference>
<dbReference type="GO" id="GO:0043010">
    <property type="term" value="P:camera-type eye development"/>
    <property type="evidence" value="ECO:0000270"/>
    <property type="project" value="RGD"/>
</dbReference>
<dbReference type="GO" id="GO:0071280">
    <property type="term" value="P:cellular response to copper ion"/>
    <property type="evidence" value="ECO:0000270"/>
    <property type="project" value="RGD"/>
</dbReference>
<dbReference type="GO" id="GO:0009804">
    <property type="term" value="P:coumarin metabolic process"/>
    <property type="evidence" value="ECO:0000314"/>
    <property type="project" value="RGD"/>
</dbReference>
<dbReference type="GO" id="GO:0019341">
    <property type="term" value="P:dibenzo-p-dioxin catabolic process"/>
    <property type="evidence" value="ECO:0000314"/>
    <property type="project" value="RGD"/>
</dbReference>
<dbReference type="GO" id="GO:0018894">
    <property type="term" value="P:dibenzo-p-dioxin metabolic process"/>
    <property type="evidence" value="ECO:0000314"/>
    <property type="project" value="RGD"/>
</dbReference>
<dbReference type="GO" id="GO:0048565">
    <property type="term" value="P:digestive tract development"/>
    <property type="evidence" value="ECO:0000270"/>
    <property type="project" value="RGD"/>
</dbReference>
<dbReference type="GO" id="GO:0008210">
    <property type="term" value="P:estrogen metabolic process"/>
    <property type="evidence" value="ECO:0000250"/>
    <property type="project" value="UniProtKB"/>
</dbReference>
<dbReference type="GO" id="GO:0006631">
    <property type="term" value="P:fatty acid metabolic process"/>
    <property type="evidence" value="ECO:0000266"/>
    <property type="project" value="RGD"/>
</dbReference>
<dbReference type="GO" id="GO:0009812">
    <property type="term" value="P:flavonoid metabolic process"/>
    <property type="evidence" value="ECO:0000314"/>
    <property type="project" value="RGD"/>
</dbReference>
<dbReference type="GO" id="GO:0070365">
    <property type="term" value="P:hepatocyte differentiation"/>
    <property type="evidence" value="ECO:0000270"/>
    <property type="project" value="RGD"/>
</dbReference>
<dbReference type="GO" id="GO:0050665">
    <property type="term" value="P:hydrogen peroxide biosynthetic process"/>
    <property type="evidence" value="ECO:0000266"/>
    <property type="project" value="RGD"/>
</dbReference>
<dbReference type="GO" id="GO:0017143">
    <property type="term" value="P:insecticide metabolic process"/>
    <property type="evidence" value="ECO:0000314"/>
    <property type="project" value="RGD"/>
</dbReference>
<dbReference type="GO" id="GO:0002933">
    <property type="term" value="P:lipid hydroxylation"/>
    <property type="evidence" value="ECO:0000266"/>
    <property type="project" value="RGD"/>
</dbReference>
<dbReference type="GO" id="GO:0001889">
    <property type="term" value="P:liver development"/>
    <property type="evidence" value="ECO:0000270"/>
    <property type="project" value="RGD"/>
</dbReference>
<dbReference type="GO" id="GO:0001676">
    <property type="term" value="P:long-chain fatty acid metabolic process"/>
    <property type="evidence" value="ECO:0000266"/>
    <property type="project" value="RGD"/>
</dbReference>
<dbReference type="GO" id="GO:0060137">
    <property type="term" value="P:maternal process involved in parturition"/>
    <property type="evidence" value="ECO:0000270"/>
    <property type="project" value="RGD"/>
</dbReference>
<dbReference type="GO" id="GO:0046209">
    <property type="term" value="P:nitric oxide metabolic process"/>
    <property type="evidence" value="ECO:0000270"/>
    <property type="project" value="RGD"/>
</dbReference>
<dbReference type="GO" id="GO:0018958">
    <property type="term" value="P:phenol-containing compound metabolic process"/>
    <property type="evidence" value="ECO:0000266"/>
    <property type="project" value="RGD"/>
</dbReference>
<dbReference type="GO" id="GO:0006778">
    <property type="term" value="P:porphyrin-containing compound metabolic process"/>
    <property type="evidence" value="ECO:0000314"/>
    <property type="project" value="RGD"/>
</dbReference>
<dbReference type="GO" id="GO:1900087">
    <property type="term" value="P:positive regulation of G1/S transition of mitotic cell cycle"/>
    <property type="evidence" value="ECO:0000314"/>
    <property type="project" value="RGD"/>
</dbReference>
<dbReference type="GO" id="GO:1904612">
    <property type="term" value="P:response to 2,3,7,8-tetrachlorodibenzodioxine"/>
    <property type="evidence" value="ECO:0000270"/>
    <property type="project" value="RGD"/>
</dbReference>
<dbReference type="GO" id="GO:1904681">
    <property type="term" value="P:response to 3-methylcholanthrene"/>
    <property type="evidence" value="ECO:0000270"/>
    <property type="project" value="RGD"/>
</dbReference>
<dbReference type="GO" id="GO:1904010">
    <property type="term" value="P:response to Aroclor 1254"/>
    <property type="evidence" value="ECO:0000270"/>
    <property type="project" value="RGD"/>
</dbReference>
<dbReference type="GO" id="GO:0046685">
    <property type="term" value="P:response to arsenic-containing substance"/>
    <property type="evidence" value="ECO:0000270"/>
    <property type="project" value="RGD"/>
</dbReference>
<dbReference type="GO" id="GO:1901497">
    <property type="term" value="P:response to diphenyl ether"/>
    <property type="evidence" value="ECO:0000270"/>
    <property type="project" value="RGD"/>
</dbReference>
<dbReference type="GO" id="GO:0032094">
    <property type="term" value="P:response to food"/>
    <property type="evidence" value="ECO:0000270"/>
    <property type="project" value="RGD"/>
</dbReference>
<dbReference type="GO" id="GO:0033595">
    <property type="term" value="P:response to genistein"/>
    <property type="evidence" value="ECO:0000270"/>
    <property type="project" value="RGD"/>
</dbReference>
<dbReference type="GO" id="GO:0009635">
    <property type="term" value="P:response to herbicide"/>
    <property type="evidence" value="ECO:0000270"/>
    <property type="project" value="RGD"/>
</dbReference>
<dbReference type="GO" id="GO:0055093">
    <property type="term" value="P:response to hyperoxia"/>
    <property type="evidence" value="ECO:0000270"/>
    <property type="project" value="RGD"/>
</dbReference>
<dbReference type="GO" id="GO:0001666">
    <property type="term" value="P:response to hypoxia"/>
    <property type="evidence" value="ECO:0000270"/>
    <property type="project" value="RGD"/>
</dbReference>
<dbReference type="GO" id="GO:0035902">
    <property type="term" value="P:response to immobilization stress"/>
    <property type="evidence" value="ECO:0000270"/>
    <property type="project" value="RGD"/>
</dbReference>
<dbReference type="GO" id="GO:0010041">
    <property type="term" value="P:response to iron(III) ion"/>
    <property type="evidence" value="ECO:0000270"/>
    <property type="project" value="RGD"/>
</dbReference>
<dbReference type="GO" id="GO:0032496">
    <property type="term" value="P:response to lipopolysaccharide"/>
    <property type="evidence" value="ECO:0000270"/>
    <property type="project" value="RGD"/>
</dbReference>
<dbReference type="GO" id="GO:0009624">
    <property type="term" value="P:response to nematode"/>
    <property type="evidence" value="ECO:0000270"/>
    <property type="project" value="RGD"/>
</dbReference>
<dbReference type="GO" id="GO:0009636">
    <property type="term" value="P:response to toxic substance"/>
    <property type="evidence" value="ECO:0000266"/>
    <property type="project" value="RGD"/>
</dbReference>
<dbReference type="GO" id="GO:0033189">
    <property type="term" value="P:response to vitamin A"/>
    <property type="evidence" value="ECO:0000270"/>
    <property type="project" value="RGD"/>
</dbReference>
<dbReference type="GO" id="GO:0009410">
    <property type="term" value="P:response to xenobiotic stimulus"/>
    <property type="evidence" value="ECO:0000270"/>
    <property type="project" value="RGD"/>
</dbReference>
<dbReference type="GO" id="GO:0042572">
    <property type="term" value="P:retinol metabolic process"/>
    <property type="evidence" value="ECO:0000250"/>
    <property type="project" value="UniProtKB"/>
</dbReference>
<dbReference type="GO" id="GO:0006694">
    <property type="term" value="P:steroid biosynthetic process"/>
    <property type="evidence" value="ECO:0007669"/>
    <property type="project" value="UniProtKB-KW"/>
</dbReference>
<dbReference type="GO" id="GO:0008202">
    <property type="term" value="P:steroid metabolic process"/>
    <property type="evidence" value="ECO:0000266"/>
    <property type="project" value="RGD"/>
</dbReference>
<dbReference type="GO" id="GO:0048771">
    <property type="term" value="P:tissue remodeling"/>
    <property type="evidence" value="ECO:0000270"/>
    <property type="project" value="RGD"/>
</dbReference>
<dbReference type="GO" id="GO:0009404">
    <property type="term" value="P:toxin metabolic process"/>
    <property type="evidence" value="ECO:0000266"/>
    <property type="project" value="RGD"/>
</dbReference>
<dbReference type="GO" id="GO:0042359">
    <property type="term" value="P:vitamin D metabolic process"/>
    <property type="evidence" value="ECO:0000266"/>
    <property type="project" value="RGD"/>
</dbReference>
<dbReference type="GO" id="GO:0006805">
    <property type="term" value="P:xenobiotic metabolic process"/>
    <property type="evidence" value="ECO:0000266"/>
    <property type="project" value="RGD"/>
</dbReference>
<dbReference type="CDD" id="cd20676">
    <property type="entry name" value="CYP1A"/>
    <property type="match status" value="1"/>
</dbReference>
<dbReference type="FunFam" id="1.10.630.10:FF:000002">
    <property type="entry name" value="Cytochrome P450 1A1"/>
    <property type="match status" value="1"/>
</dbReference>
<dbReference type="Gene3D" id="1.10.630.10">
    <property type="entry name" value="Cytochrome P450"/>
    <property type="match status" value="1"/>
</dbReference>
<dbReference type="InterPro" id="IPR001128">
    <property type="entry name" value="Cyt_P450"/>
</dbReference>
<dbReference type="InterPro" id="IPR017972">
    <property type="entry name" value="Cyt_P450_CS"/>
</dbReference>
<dbReference type="InterPro" id="IPR002401">
    <property type="entry name" value="Cyt_P450_E_grp-I"/>
</dbReference>
<dbReference type="InterPro" id="IPR008066">
    <property type="entry name" value="Cyt_P450_E_grp-I_CYP1"/>
</dbReference>
<dbReference type="InterPro" id="IPR036396">
    <property type="entry name" value="Cyt_P450_sf"/>
</dbReference>
<dbReference type="PANTHER" id="PTHR24289:SF21">
    <property type="entry name" value="CYTOCHROME P450 1A"/>
    <property type="match status" value="1"/>
</dbReference>
<dbReference type="PANTHER" id="PTHR24289">
    <property type="entry name" value="STEROID 17-ALPHA-HYDROXYLASE/17,20 LYASE"/>
    <property type="match status" value="1"/>
</dbReference>
<dbReference type="Pfam" id="PF00067">
    <property type="entry name" value="p450"/>
    <property type="match status" value="1"/>
</dbReference>
<dbReference type="PRINTS" id="PR00463">
    <property type="entry name" value="EP450I"/>
</dbReference>
<dbReference type="PRINTS" id="PR01683">
    <property type="entry name" value="EP450ICYP1A"/>
</dbReference>
<dbReference type="PRINTS" id="PR00385">
    <property type="entry name" value="P450"/>
</dbReference>
<dbReference type="SUPFAM" id="SSF48264">
    <property type="entry name" value="Cytochrome P450"/>
    <property type="match status" value="1"/>
</dbReference>
<dbReference type="PROSITE" id="PS00086">
    <property type="entry name" value="CYTOCHROME_P450"/>
    <property type="match status" value="1"/>
</dbReference>
<organism>
    <name type="scientific">Rattus norvegicus</name>
    <name type="common">Rat</name>
    <dbReference type="NCBI Taxonomy" id="10116"/>
    <lineage>
        <taxon>Eukaryota</taxon>
        <taxon>Metazoa</taxon>
        <taxon>Chordata</taxon>
        <taxon>Craniata</taxon>
        <taxon>Vertebrata</taxon>
        <taxon>Euteleostomi</taxon>
        <taxon>Mammalia</taxon>
        <taxon>Eutheria</taxon>
        <taxon>Euarchontoglires</taxon>
        <taxon>Glires</taxon>
        <taxon>Rodentia</taxon>
        <taxon>Myomorpha</taxon>
        <taxon>Muroidea</taxon>
        <taxon>Muridae</taxon>
        <taxon>Murinae</taxon>
        <taxon>Rattus</taxon>
    </lineage>
</organism>
<reference key="1">
    <citation type="journal article" date="1984" name="Proc. Natl. Acad. Sci. U.S.A.">
        <title>Distinct organization of methylcholanthrene- and phenobarbital-inducible cytochrome P-450 genes in the rat.</title>
        <authorList>
            <person name="Sogawa K."/>
            <person name="Gotoh O."/>
            <person name="Kawajiri K."/>
            <person name="Fujii-Kuriyama Y."/>
        </authorList>
    </citation>
    <scope>NUCLEOTIDE SEQUENCE [GENOMIC DNA]</scope>
</reference>
<reference key="2">
    <citation type="journal article" date="1984" name="Nucleic Acids Res.">
        <title>Nucleotide sequence of a full-length cDNA coding for 3-methylcholanthrene-induced rat liver cytochrome P-450MC.</title>
        <authorList>
            <person name="Yabusaki Y."/>
            <person name="Shimizu M."/>
            <person name="Murakami H."/>
            <person name="Nakamura K."/>
            <person name="Oeda K."/>
            <person name="Ohkawa H."/>
        </authorList>
    </citation>
    <scope>NUCLEOTIDE SEQUENCE [MRNA]</scope>
</reference>
<reference key="3">
    <citation type="journal article" date="1985" name="Arch. Biochem. Biophys.">
        <title>Gene structure and nucleotide sequence for rat cytochrome P-450c.</title>
        <authorList>
            <person name="Hines R.N."/>
            <person name="Levy J.B."/>
            <person name="Conrad R.D."/>
            <person name="Iversen P.L."/>
            <person name="Shen M.-L."/>
            <person name="Renli A.M."/>
            <person name="Bresnick E."/>
        </authorList>
    </citation>
    <scope>NUCLEOTIDE SEQUENCE [MRNA]</scope>
</reference>
<reference key="4">
    <citation type="journal article" date="1986" name="Biochemistry">
        <title>Amino-terminal sequence and structure of monoclonal antibody immunopurified cytochromes P-450.</title>
        <authorList>
            <person name="Cheng K.C."/>
            <person name="Park S.S."/>
            <person name="Krutzsch H.C."/>
            <person name="Grantham P.H."/>
            <person name="Gelboin H.V."/>
            <person name="Friedman F.K."/>
        </authorList>
    </citation>
    <scope>PROTEIN SEQUENCE OF 2-26</scope>
</reference>
<reference key="5">
    <citation type="journal article" date="1988" name="Biochem. Pharmacol.">
        <title>Effect of nutritional imbalances on cytochrome P-450 isozymes in rat liver.</title>
        <authorList>
            <person name="Amelizad Z."/>
            <person name="Narbonne J.F."/>
            <person name="Wolf C.R."/>
            <person name="Robertson L.W."/>
            <person name="Oesch F."/>
        </authorList>
    </citation>
    <scope>PROTEIN SEQUENCE OF 2-22</scope>
</reference>
<reference key="6">
    <citation type="journal article" date="1996" name="Arch. Biochem. Biophys.">
        <title>Identification and characterization of cytochrome P4501A1 amino acid residues interacting with a radiolabeled photoaffinity diazido-benzphetamine analogue.</title>
        <authorList>
            <person name="Cvrk T."/>
            <person name="Hodek P."/>
            <person name="Strobel H.W."/>
        </authorList>
    </citation>
    <scope>PARTIAL PROTEIN SEQUENCE</scope>
</reference>
<reference key="7">
    <citation type="journal article" date="1997" name="J. Cell Biol.">
        <title>Targeting of NH2-terminal-processed microsomal protein to mitochondria: a novel pathway for the biogenesis of hepatic mitochondrial P450MT2.</title>
        <authorList>
            <person name="Addya S."/>
            <person name="Anandatheerthavarada H.K."/>
            <person name="Biswas G."/>
            <person name="Bhagwat S.V."/>
            <person name="Mullick J."/>
            <person name="Avadhani N.G."/>
        </authorList>
    </citation>
    <scope>SUBCELLULAR LOCATION</scope>
    <scope>MUTAGENESIS OF 32-VAL-THR-33</scope>
    <scope>TOPOLOGY</scope>
    <source>
        <strain>Sprague-Dawley</strain>
        <tissue>Liver</tissue>
    </source>
</reference>
<reference key="8">
    <citation type="journal article" date="2009" name="J. Biol. Chem.">
        <title>Mitochondrial targeting of cytochrome P450 proteins containing NH2-terminal chimeric signals involves an unusual TOM20/TOM22 bypass mechanism.</title>
        <authorList>
            <person name="Anandatheerthavarada H.K."/>
            <person name="Sepuri N.B."/>
            <person name="Avadhani N.G."/>
        </authorList>
    </citation>
    <scope>SUBCELLULAR LOCATION</scope>
    <scope>INTERACTION WITH HSP70</scope>
    <scope>INTERACTION WITH HSP90</scope>
    <scope>INTERACTION WITH TOMM40</scope>
    <scope>TOPOLOGY</scope>
</reference>
<reference key="9">
    <citation type="journal article" date="2010" name="Rapid Commun. Mass Spectrom.">
        <title>Analysis of epoxyeicosatrienoic acids by chiral liquid chromatography/electron capture atmospheric pressure chemical ionization mass spectrometry using [13C]-analog internal standards.</title>
        <authorList>
            <person name="Mesaros C."/>
            <person name="Lee S.H."/>
            <person name="Blair I.A."/>
        </authorList>
    </citation>
    <scope>FUNCTION</scope>
    <scope>CATALYTIC ACTIVITY</scope>
    <scope>PATHWAY</scope>
</reference>
<reference key="10">
    <citation type="journal article" date="2013" name="PLoS ONE">
        <title>Discovery and confirmation of O-GlcNAcylated proteins in rat liver mitochondria by combination of mass spectrometry and immunological methods.</title>
        <authorList>
            <person name="Cao W."/>
            <person name="Cao J."/>
            <person name="Huang J."/>
            <person name="Yao J."/>
            <person name="Yan G."/>
            <person name="Xu H."/>
            <person name="Yang P."/>
        </authorList>
    </citation>
    <scope>GLYCOSYLATION AT SER-71</scope>
</reference>